<sequence>MSAIIELKKVTFNYHKDQEKPTLDGVSFHVKQGEWLSIIGHNGSGKSTTIRLIDGLLEPESGSIIVDGDLLTITNVWEIRHKIGMVFQNPDNQFVGATVEDDVAFGLENKGIAHEDIKERVNHALELVGMQNFKEKEPARLSGGQKQRVAIAGAVAMKPKIIILDEATSMLDPKGRLELIKTIKNIRDDYQLTVISITHDLDEVALSDRVLVMKDGQVESTSTPEQLFARGDELLQLGLDIPFTTSVVQMLQEEGYPIDYGYLTEKELENQLCQLISKM</sequence>
<feature type="chain" id="PRO_0000092112" description="Energy-coupling factor transporter ATP-binding protein EcfA1">
    <location>
        <begin position="1"/>
        <end position="279"/>
    </location>
</feature>
<feature type="domain" description="ABC transporter" evidence="1">
    <location>
        <begin position="5"/>
        <end position="240"/>
    </location>
</feature>
<feature type="binding site" evidence="1">
    <location>
        <begin position="40"/>
        <end position="47"/>
    </location>
    <ligand>
        <name>ATP</name>
        <dbReference type="ChEBI" id="CHEBI:30616"/>
    </ligand>
</feature>
<organism>
    <name type="scientific">Streptococcus pyogenes serotype M18 (strain MGAS8232)</name>
    <dbReference type="NCBI Taxonomy" id="186103"/>
    <lineage>
        <taxon>Bacteria</taxon>
        <taxon>Bacillati</taxon>
        <taxon>Bacillota</taxon>
        <taxon>Bacilli</taxon>
        <taxon>Lactobacillales</taxon>
        <taxon>Streptococcaceae</taxon>
        <taxon>Streptococcus</taxon>
    </lineage>
</organism>
<name>ECFA1_STRP8</name>
<accession>Q7CMM7</accession>
<gene>
    <name evidence="1" type="primary">ecfA1</name>
    <name type="synonym">cbiO1</name>
    <name type="ordered locus">spyM18_2230</name>
</gene>
<evidence type="ECO:0000255" key="1">
    <source>
        <dbReference type="HAMAP-Rule" id="MF_01710"/>
    </source>
</evidence>
<evidence type="ECO:0000305" key="2"/>
<comment type="function">
    <text evidence="1">ATP-binding (A) component of a common energy-coupling factor (ECF) ABC-transporter complex. Unlike classic ABC transporters this ECF transporter provides the energy necessary to transport a number of different substrates.</text>
</comment>
<comment type="subunit">
    <text evidence="1">Forms a stable energy-coupling factor (ECF) transporter complex composed of 2 membrane-embedded substrate-binding proteins (S component), 2 ATP-binding proteins (A component) and 2 transmembrane proteins (T component).</text>
</comment>
<comment type="subcellular location">
    <subcellularLocation>
        <location evidence="1">Cell membrane</location>
        <topology evidence="1">Peripheral membrane protein</topology>
    </subcellularLocation>
</comment>
<comment type="similarity">
    <text evidence="1">Belongs to the ABC transporter superfamily. Energy-coupling factor EcfA family.</text>
</comment>
<comment type="sequence caution" evidence="2">
    <conflict type="erroneous initiation">
        <sequence resource="EMBL-CDS" id="AAL98662"/>
    </conflict>
    <text>Extended N-terminus.</text>
</comment>
<proteinExistence type="inferred from homology"/>
<dbReference type="EC" id="7.-.-.-" evidence="1"/>
<dbReference type="EMBL" id="AE009949">
    <property type="protein sequence ID" value="AAL98662.1"/>
    <property type="status" value="ALT_INIT"/>
    <property type="molecule type" value="Genomic_DNA"/>
</dbReference>
<dbReference type="RefSeq" id="WP_002992388.1">
    <property type="nucleotide sequence ID" value="NC_003485.1"/>
</dbReference>
<dbReference type="SMR" id="Q7CMM7"/>
<dbReference type="KEGG" id="spm:spyM18_2230"/>
<dbReference type="HOGENOM" id="CLU_000604_1_22_9"/>
<dbReference type="GO" id="GO:0043190">
    <property type="term" value="C:ATP-binding cassette (ABC) transporter complex"/>
    <property type="evidence" value="ECO:0007669"/>
    <property type="project" value="TreeGrafter"/>
</dbReference>
<dbReference type="GO" id="GO:0005524">
    <property type="term" value="F:ATP binding"/>
    <property type="evidence" value="ECO:0007669"/>
    <property type="project" value="UniProtKB-KW"/>
</dbReference>
<dbReference type="GO" id="GO:0016887">
    <property type="term" value="F:ATP hydrolysis activity"/>
    <property type="evidence" value="ECO:0007669"/>
    <property type="project" value="InterPro"/>
</dbReference>
<dbReference type="GO" id="GO:0042626">
    <property type="term" value="F:ATPase-coupled transmembrane transporter activity"/>
    <property type="evidence" value="ECO:0007669"/>
    <property type="project" value="TreeGrafter"/>
</dbReference>
<dbReference type="CDD" id="cd03225">
    <property type="entry name" value="ABC_cobalt_CbiO_domain1"/>
    <property type="match status" value="1"/>
</dbReference>
<dbReference type="FunFam" id="3.40.50.300:FF:000224">
    <property type="entry name" value="Energy-coupling factor transporter ATP-binding protein EcfA"/>
    <property type="match status" value="1"/>
</dbReference>
<dbReference type="Gene3D" id="3.40.50.300">
    <property type="entry name" value="P-loop containing nucleotide triphosphate hydrolases"/>
    <property type="match status" value="1"/>
</dbReference>
<dbReference type="InterPro" id="IPR003593">
    <property type="entry name" value="AAA+_ATPase"/>
</dbReference>
<dbReference type="InterPro" id="IPR003439">
    <property type="entry name" value="ABC_transporter-like_ATP-bd"/>
</dbReference>
<dbReference type="InterPro" id="IPR017871">
    <property type="entry name" value="ABC_transporter-like_CS"/>
</dbReference>
<dbReference type="InterPro" id="IPR015856">
    <property type="entry name" value="ABC_transpr_CbiO/EcfA_su"/>
</dbReference>
<dbReference type="InterPro" id="IPR050095">
    <property type="entry name" value="ECF_ABC_transporter_ATP-bd"/>
</dbReference>
<dbReference type="InterPro" id="IPR030947">
    <property type="entry name" value="EcfA_1"/>
</dbReference>
<dbReference type="InterPro" id="IPR027417">
    <property type="entry name" value="P-loop_NTPase"/>
</dbReference>
<dbReference type="NCBIfam" id="TIGR04520">
    <property type="entry name" value="ECF_ATPase_1"/>
    <property type="match status" value="1"/>
</dbReference>
<dbReference type="NCBIfam" id="NF010156">
    <property type="entry name" value="PRK13635.1"/>
    <property type="match status" value="1"/>
</dbReference>
<dbReference type="NCBIfam" id="NF010167">
    <property type="entry name" value="PRK13648.1"/>
    <property type="match status" value="1"/>
</dbReference>
<dbReference type="PANTHER" id="PTHR43553:SF24">
    <property type="entry name" value="ENERGY-COUPLING FACTOR TRANSPORTER ATP-BINDING PROTEIN ECFA1"/>
    <property type="match status" value="1"/>
</dbReference>
<dbReference type="PANTHER" id="PTHR43553">
    <property type="entry name" value="HEAVY METAL TRANSPORTER"/>
    <property type="match status" value="1"/>
</dbReference>
<dbReference type="Pfam" id="PF00005">
    <property type="entry name" value="ABC_tran"/>
    <property type="match status" value="1"/>
</dbReference>
<dbReference type="SMART" id="SM00382">
    <property type="entry name" value="AAA"/>
    <property type="match status" value="1"/>
</dbReference>
<dbReference type="SUPFAM" id="SSF52540">
    <property type="entry name" value="P-loop containing nucleoside triphosphate hydrolases"/>
    <property type="match status" value="1"/>
</dbReference>
<dbReference type="PROSITE" id="PS00211">
    <property type="entry name" value="ABC_TRANSPORTER_1"/>
    <property type="match status" value="1"/>
</dbReference>
<dbReference type="PROSITE" id="PS50893">
    <property type="entry name" value="ABC_TRANSPORTER_2"/>
    <property type="match status" value="1"/>
</dbReference>
<dbReference type="PROSITE" id="PS51246">
    <property type="entry name" value="CBIO"/>
    <property type="match status" value="1"/>
</dbReference>
<reference key="1">
    <citation type="journal article" date="2002" name="Proc. Natl. Acad. Sci. U.S.A.">
        <title>Genome sequence and comparative microarray analysis of serotype M18 group A Streptococcus strains associated with acute rheumatic fever outbreaks.</title>
        <authorList>
            <person name="Smoot J.C."/>
            <person name="Barbian K.D."/>
            <person name="Van Gompel J.J."/>
            <person name="Smoot L.M."/>
            <person name="Chaussee M.S."/>
            <person name="Sylva G.L."/>
            <person name="Sturdevant D.E."/>
            <person name="Ricklefs S.M."/>
            <person name="Porcella S.F."/>
            <person name="Parkins L.D."/>
            <person name="Beres S.B."/>
            <person name="Campbell D.S."/>
            <person name="Smith T.M."/>
            <person name="Zhang Q."/>
            <person name="Kapur V."/>
            <person name="Daly J.A."/>
            <person name="Veasy L.G."/>
            <person name="Musser J.M."/>
        </authorList>
    </citation>
    <scope>NUCLEOTIDE SEQUENCE [LARGE SCALE GENOMIC DNA]</scope>
    <source>
        <strain>MGAS8232</strain>
    </source>
</reference>
<protein>
    <recommendedName>
        <fullName evidence="1">Energy-coupling factor transporter ATP-binding protein EcfA1</fullName>
        <shortName evidence="1">ECF transporter A component EcfA1</shortName>
        <ecNumber evidence="1">7.-.-.-</ecNumber>
    </recommendedName>
</protein>
<keyword id="KW-0067">ATP-binding</keyword>
<keyword id="KW-1003">Cell membrane</keyword>
<keyword id="KW-0472">Membrane</keyword>
<keyword id="KW-0547">Nucleotide-binding</keyword>
<keyword id="KW-1278">Translocase</keyword>
<keyword id="KW-0813">Transport</keyword>